<organism>
    <name type="scientific">Staphylococcus aureus (strain bovine RF122 / ET3-1)</name>
    <dbReference type="NCBI Taxonomy" id="273036"/>
    <lineage>
        <taxon>Bacteria</taxon>
        <taxon>Bacillati</taxon>
        <taxon>Bacillota</taxon>
        <taxon>Bacilli</taxon>
        <taxon>Bacillales</taxon>
        <taxon>Staphylococcaceae</taxon>
        <taxon>Staphylococcus</taxon>
    </lineage>
</organism>
<protein>
    <recommendedName>
        <fullName evidence="1">S-adenosylmethionine synthase</fullName>
        <shortName evidence="1">AdoMet synthase</shortName>
        <ecNumber evidence="1">2.5.1.6</ecNumber>
    </recommendedName>
    <alternativeName>
        <fullName evidence="1">MAT</fullName>
    </alternativeName>
    <alternativeName>
        <fullName evidence="1">Methionine adenosyltransferase</fullName>
    </alternativeName>
</protein>
<evidence type="ECO:0000255" key="1">
    <source>
        <dbReference type="HAMAP-Rule" id="MF_00086"/>
    </source>
</evidence>
<evidence type="ECO:0000305" key="2"/>
<keyword id="KW-0067">ATP-binding</keyword>
<keyword id="KW-0963">Cytoplasm</keyword>
<keyword id="KW-0460">Magnesium</keyword>
<keyword id="KW-0479">Metal-binding</keyword>
<keyword id="KW-0547">Nucleotide-binding</keyword>
<keyword id="KW-0554">One-carbon metabolism</keyword>
<keyword id="KW-0630">Potassium</keyword>
<keyword id="KW-0808">Transferase</keyword>
<name>METK_STAAB</name>
<comment type="function">
    <text evidence="1">Catalyzes the formation of S-adenosylmethionine (AdoMet) from methionine and ATP. The overall synthetic reaction is composed of two sequential steps, AdoMet formation and the subsequent tripolyphosphate hydrolysis which occurs prior to release of AdoMet from the enzyme.</text>
</comment>
<comment type="catalytic activity">
    <reaction evidence="1">
        <text>L-methionine + ATP + H2O = S-adenosyl-L-methionine + phosphate + diphosphate</text>
        <dbReference type="Rhea" id="RHEA:21080"/>
        <dbReference type="ChEBI" id="CHEBI:15377"/>
        <dbReference type="ChEBI" id="CHEBI:30616"/>
        <dbReference type="ChEBI" id="CHEBI:33019"/>
        <dbReference type="ChEBI" id="CHEBI:43474"/>
        <dbReference type="ChEBI" id="CHEBI:57844"/>
        <dbReference type="ChEBI" id="CHEBI:59789"/>
        <dbReference type="EC" id="2.5.1.6"/>
    </reaction>
</comment>
<comment type="cofactor">
    <cofactor evidence="1">
        <name>Mg(2+)</name>
        <dbReference type="ChEBI" id="CHEBI:18420"/>
    </cofactor>
    <text evidence="1">Binds 2 divalent ions per subunit.</text>
</comment>
<comment type="cofactor">
    <cofactor evidence="1">
        <name>K(+)</name>
        <dbReference type="ChEBI" id="CHEBI:29103"/>
    </cofactor>
    <text evidence="1">Binds 1 potassium ion per subunit.</text>
</comment>
<comment type="pathway">
    <text evidence="1">Amino-acid biosynthesis; S-adenosyl-L-methionine biosynthesis; S-adenosyl-L-methionine from L-methionine: step 1/1.</text>
</comment>
<comment type="subunit">
    <text evidence="1">Homotetramer; dimer of dimers.</text>
</comment>
<comment type="subcellular location">
    <subcellularLocation>
        <location evidence="1">Cytoplasm</location>
    </subcellularLocation>
</comment>
<comment type="similarity">
    <text evidence="1">Belongs to the AdoMet synthase family.</text>
</comment>
<comment type="sequence caution" evidence="2">
    <conflict type="erroneous initiation">
        <sequence resource="EMBL-CDS" id="CAI81334"/>
    </conflict>
</comment>
<dbReference type="EC" id="2.5.1.6" evidence="1"/>
<dbReference type="EMBL" id="AJ938182">
    <property type="protein sequence ID" value="CAI81334.1"/>
    <property type="status" value="ALT_INIT"/>
    <property type="molecule type" value="Genomic_DNA"/>
</dbReference>
<dbReference type="RefSeq" id="WP_000933822.1">
    <property type="nucleotide sequence ID" value="NC_007622.1"/>
</dbReference>
<dbReference type="SMR" id="Q2YTK1"/>
<dbReference type="KEGG" id="sab:SAB1645c"/>
<dbReference type="HOGENOM" id="CLU_041802_1_1_9"/>
<dbReference type="UniPathway" id="UPA00315">
    <property type="reaction ID" value="UER00080"/>
</dbReference>
<dbReference type="GO" id="GO:0005737">
    <property type="term" value="C:cytoplasm"/>
    <property type="evidence" value="ECO:0007669"/>
    <property type="project" value="UniProtKB-SubCell"/>
</dbReference>
<dbReference type="GO" id="GO:0005524">
    <property type="term" value="F:ATP binding"/>
    <property type="evidence" value="ECO:0007669"/>
    <property type="project" value="UniProtKB-UniRule"/>
</dbReference>
<dbReference type="GO" id="GO:0000287">
    <property type="term" value="F:magnesium ion binding"/>
    <property type="evidence" value="ECO:0007669"/>
    <property type="project" value="UniProtKB-UniRule"/>
</dbReference>
<dbReference type="GO" id="GO:0004478">
    <property type="term" value="F:methionine adenosyltransferase activity"/>
    <property type="evidence" value="ECO:0007669"/>
    <property type="project" value="UniProtKB-UniRule"/>
</dbReference>
<dbReference type="GO" id="GO:0006730">
    <property type="term" value="P:one-carbon metabolic process"/>
    <property type="evidence" value="ECO:0007669"/>
    <property type="project" value="UniProtKB-KW"/>
</dbReference>
<dbReference type="GO" id="GO:0006556">
    <property type="term" value="P:S-adenosylmethionine biosynthetic process"/>
    <property type="evidence" value="ECO:0007669"/>
    <property type="project" value="UniProtKB-UniRule"/>
</dbReference>
<dbReference type="CDD" id="cd18079">
    <property type="entry name" value="S-AdoMet_synt"/>
    <property type="match status" value="1"/>
</dbReference>
<dbReference type="FunFam" id="3.30.300.10:FF:000003">
    <property type="entry name" value="S-adenosylmethionine synthase"/>
    <property type="match status" value="1"/>
</dbReference>
<dbReference type="FunFam" id="3.30.300.10:FF:000004">
    <property type="entry name" value="S-adenosylmethionine synthase"/>
    <property type="match status" value="1"/>
</dbReference>
<dbReference type="Gene3D" id="3.30.300.10">
    <property type="match status" value="3"/>
</dbReference>
<dbReference type="HAMAP" id="MF_00086">
    <property type="entry name" value="S_AdoMet_synth1"/>
    <property type="match status" value="1"/>
</dbReference>
<dbReference type="InterPro" id="IPR022631">
    <property type="entry name" value="ADOMET_SYNTHASE_CS"/>
</dbReference>
<dbReference type="InterPro" id="IPR022630">
    <property type="entry name" value="S-AdoMet_synt_C"/>
</dbReference>
<dbReference type="InterPro" id="IPR022629">
    <property type="entry name" value="S-AdoMet_synt_central"/>
</dbReference>
<dbReference type="InterPro" id="IPR022628">
    <property type="entry name" value="S-AdoMet_synt_N"/>
</dbReference>
<dbReference type="InterPro" id="IPR002133">
    <property type="entry name" value="S-AdoMet_synthetase"/>
</dbReference>
<dbReference type="InterPro" id="IPR022636">
    <property type="entry name" value="S-AdoMet_synthetase_sfam"/>
</dbReference>
<dbReference type="NCBIfam" id="TIGR01034">
    <property type="entry name" value="metK"/>
    <property type="match status" value="1"/>
</dbReference>
<dbReference type="PANTHER" id="PTHR11964">
    <property type="entry name" value="S-ADENOSYLMETHIONINE SYNTHETASE"/>
    <property type="match status" value="1"/>
</dbReference>
<dbReference type="Pfam" id="PF02773">
    <property type="entry name" value="S-AdoMet_synt_C"/>
    <property type="match status" value="1"/>
</dbReference>
<dbReference type="Pfam" id="PF02772">
    <property type="entry name" value="S-AdoMet_synt_M"/>
    <property type="match status" value="1"/>
</dbReference>
<dbReference type="Pfam" id="PF00438">
    <property type="entry name" value="S-AdoMet_synt_N"/>
    <property type="match status" value="1"/>
</dbReference>
<dbReference type="PIRSF" id="PIRSF000497">
    <property type="entry name" value="MAT"/>
    <property type="match status" value="1"/>
</dbReference>
<dbReference type="SUPFAM" id="SSF55973">
    <property type="entry name" value="S-adenosylmethionine synthetase"/>
    <property type="match status" value="3"/>
</dbReference>
<dbReference type="PROSITE" id="PS00376">
    <property type="entry name" value="ADOMET_SYNTHASE_1"/>
    <property type="match status" value="1"/>
</dbReference>
<dbReference type="PROSITE" id="PS00377">
    <property type="entry name" value="ADOMET_SYNTHASE_2"/>
    <property type="match status" value="1"/>
</dbReference>
<accession>Q2YTK1</accession>
<proteinExistence type="inferred from homology"/>
<gene>
    <name evidence="1" type="primary">metK</name>
    <name type="ordered locus">SAB1645c</name>
</gene>
<reference key="1">
    <citation type="journal article" date="2007" name="PLoS ONE">
        <title>Molecular correlates of host specialization in Staphylococcus aureus.</title>
        <authorList>
            <person name="Herron-Olson L."/>
            <person name="Fitzgerald J.R."/>
            <person name="Musser J.M."/>
            <person name="Kapur V."/>
        </authorList>
    </citation>
    <scope>NUCLEOTIDE SEQUENCE [LARGE SCALE GENOMIC DNA]</scope>
    <source>
        <strain>bovine RF122 / ET3-1</strain>
    </source>
</reference>
<sequence length="397" mass="43641">MLNNKRLFTSESVTEGHPDKIADQVSDAILDAILKDDPNARVACETTVTTGMALIAGEISTTTYVDIPKVVRETIKEIGYTRAKYGYDYETMAILTAIDEQSPDIAQGVDKALEYRDKDSEEEIEATGAGDQGLMFGYATNETETYMPLAIYLSHQLAKRLSDVRKDGTLNYLRPDGKVQVTVEYDENDNPVRIDTIVVSTQHAEDVTLEQIQEDIKAHVIYPTVPENLINEQTKFYINPTGRFVIGGPQGDAGLTGRKIIVDTYGGYARHGGGCFSGKDPTKVDRSAAYAARYVAKNIVAAGLADQCEVQLAYAIGVAEPVSIAIDTFGTGKVSEGQLVEAVRKHFDLRPAGIIKMLDLKQPIYKQTAAYGHFGRTDVLFPWEKLDKVEELKDAVK</sequence>
<feature type="chain" id="PRO_0000241039" description="S-adenosylmethionine synthase">
    <location>
        <begin position="1"/>
        <end position="397"/>
    </location>
</feature>
<feature type="region of interest" description="Flexible loop" evidence="1">
    <location>
        <begin position="101"/>
        <end position="111"/>
    </location>
</feature>
<feature type="binding site" description="in other chain" evidence="1">
    <location>
        <position position="17"/>
    </location>
    <ligand>
        <name>ATP</name>
        <dbReference type="ChEBI" id="CHEBI:30616"/>
        <note>ligand shared between two neighboring subunits</note>
    </ligand>
</feature>
<feature type="binding site" evidence="1">
    <location>
        <position position="19"/>
    </location>
    <ligand>
        <name>Mg(2+)</name>
        <dbReference type="ChEBI" id="CHEBI:18420"/>
    </ligand>
</feature>
<feature type="binding site" evidence="1">
    <location>
        <position position="45"/>
    </location>
    <ligand>
        <name>K(+)</name>
        <dbReference type="ChEBI" id="CHEBI:29103"/>
    </ligand>
</feature>
<feature type="binding site" description="in other chain" evidence="1">
    <location>
        <position position="58"/>
    </location>
    <ligand>
        <name>L-methionine</name>
        <dbReference type="ChEBI" id="CHEBI:57844"/>
        <note>ligand shared between two neighboring subunits</note>
    </ligand>
</feature>
<feature type="binding site" description="in other chain" evidence="1">
    <location>
        <position position="101"/>
    </location>
    <ligand>
        <name>L-methionine</name>
        <dbReference type="ChEBI" id="CHEBI:57844"/>
        <note>ligand shared between two neighboring subunits</note>
    </ligand>
</feature>
<feature type="binding site" description="in other chain" evidence="1">
    <location>
        <begin position="176"/>
        <end position="178"/>
    </location>
    <ligand>
        <name>ATP</name>
        <dbReference type="ChEBI" id="CHEBI:30616"/>
        <note>ligand shared between two neighboring subunits</note>
    </ligand>
</feature>
<feature type="binding site" description="in other chain" evidence="1">
    <location>
        <begin position="243"/>
        <end position="244"/>
    </location>
    <ligand>
        <name>ATP</name>
        <dbReference type="ChEBI" id="CHEBI:30616"/>
        <note>ligand shared between two neighboring subunits</note>
    </ligand>
</feature>
<feature type="binding site" evidence="1">
    <location>
        <position position="252"/>
    </location>
    <ligand>
        <name>ATP</name>
        <dbReference type="ChEBI" id="CHEBI:30616"/>
        <note>ligand shared between two neighboring subunits</note>
    </ligand>
</feature>
<feature type="binding site" evidence="1">
    <location>
        <position position="252"/>
    </location>
    <ligand>
        <name>L-methionine</name>
        <dbReference type="ChEBI" id="CHEBI:57844"/>
        <note>ligand shared between two neighboring subunits</note>
    </ligand>
</feature>
<feature type="binding site" description="in other chain" evidence="1">
    <location>
        <begin position="258"/>
        <end position="259"/>
    </location>
    <ligand>
        <name>ATP</name>
        <dbReference type="ChEBI" id="CHEBI:30616"/>
        <note>ligand shared between two neighboring subunits</note>
    </ligand>
</feature>
<feature type="binding site" evidence="1">
    <location>
        <position position="279"/>
    </location>
    <ligand>
        <name>ATP</name>
        <dbReference type="ChEBI" id="CHEBI:30616"/>
        <note>ligand shared between two neighboring subunits</note>
    </ligand>
</feature>
<feature type="binding site" description="in other chain" evidence="1">
    <location>
        <position position="283"/>
    </location>
    <ligand>
        <name>L-methionine</name>
        <dbReference type="ChEBI" id="CHEBI:57844"/>
        <note>ligand shared between two neighboring subunits</note>
    </ligand>
</feature>